<gene>
    <name evidence="3" type="primary">nsrM</name>
    <name type="ORF">P174DRAFT_512928</name>
</gene>
<comment type="function">
    <text evidence="2">Transcriptional regulator; part of the gene cluster that mediates the biosynthesis of the tetrahydroxanthone dimer neosartorin, which exhibits antibacterial activity.</text>
</comment>
<comment type="subcellular location">
    <subcellularLocation>
        <location evidence="1">Nucleus</location>
    </subcellularLocation>
</comment>
<comment type="sequence caution" evidence="4">
    <conflict type="erroneous gene model prediction">
        <sequence resource="EMBL-CDS" id="PKX92297"/>
    </conflict>
</comment>
<protein>
    <recommendedName>
        <fullName evidence="3">Transcriptional regulator nsrM</fullName>
    </recommendedName>
    <alternativeName>
        <fullName evidence="3">Neosartorin biosynthesis cluster protein M</fullName>
    </alternativeName>
</protein>
<proteinExistence type="inferred from homology"/>
<feature type="chain" id="PRO_0000453509" description="Transcriptional regulator nsrM">
    <location>
        <begin position="1"/>
        <end position="708"/>
    </location>
</feature>
<feature type="DNA-binding region" description="Zn(2)-C6 fungal-type" evidence="1">
    <location>
        <begin position="37"/>
        <end position="63"/>
    </location>
</feature>
<keyword id="KW-0238">DNA-binding</keyword>
<keyword id="KW-0479">Metal-binding</keyword>
<keyword id="KW-0539">Nucleus</keyword>
<keyword id="KW-1185">Reference proteome</keyword>
<keyword id="KW-0804">Transcription</keyword>
<keyword id="KW-0805">Transcription regulation</keyword>
<keyword id="KW-0862">Zinc</keyword>
<sequence length="708" mass="79970">MFLLHFPSALIILVPSHRIAFTMSTDHSARSPRLRACVRCQQRKVRCDHKSPCGNCVASDSQCVPATLTPRRRRFQERVLLDRLRHYEGLLRQHNIYFEPLHPQAKQEPVIADVPRDCERSETARAQTPVQSQAVDLWQAISRVTLEPEDDDGDSPDVQADGVENAWDHHVDQPEANDQTGDDLLFGQPQANVNVLALHPEQAQIFRLWQTYLENVNPLLKVTHTPTLQPRIVDAVSDLGDIHPTLEALMFSIYCIAVMSLADNECHRLLKSSKEDLLARYRLGCRQVLIKCRPWQFTNVDGLTAVYLYLVSVSPQTDPRSLSSMLAAALRIAQRMGLHNESTYTRYTAVEAEMRRRLWWSLVIFDHRMCEMSDYKVTTLTPTWDCRIPLNKPTEALFAVVRSELADLIRHTTFHINFVNPVLAAVAKAKDPGHVSISADGEMLTIQRAIEEKYLAFCDPADPLHFMTIWTTRGYLARNRLLEHYARHLSSPAMQQTDAQRNAALSYALEMLECDTRLRVSPLTCRYRWLVDFHVPALAYIHVLNDLRKRPTESHAGKAWQAMSENYEARAMHPKPSGQGVFTVFARVVLQAWGAREIFLRQRGMPVEAPQIVLDIRSKVGQTSSGSSMVPSCSTGEPSHSSIAISAHSEAIPAQMNFTGHSADGQAFPGPDLGPSSFPDVAGPPGMDIDIDQFWTAMDWRLMHTQAW</sequence>
<name>NSRM_ASPN1</name>
<reference key="1">
    <citation type="journal article" date="2018" name="Proc. Natl. Acad. Sci. U.S.A.">
        <title>Linking secondary metabolites to gene clusters through genome sequencing of six diverse Aspergillus species.</title>
        <authorList>
            <person name="Kjaerboelling I."/>
            <person name="Vesth T.C."/>
            <person name="Frisvad J.C."/>
            <person name="Nybo J.L."/>
            <person name="Theobald S."/>
            <person name="Kuo A."/>
            <person name="Bowyer P."/>
            <person name="Matsuda Y."/>
            <person name="Mondo S."/>
            <person name="Lyhne E.K."/>
            <person name="Kogle M.E."/>
            <person name="Clum A."/>
            <person name="Lipzen A."/>
            <person name="Salamov A."/>
            <person name="Ngan C.Y."/>
            <person name="Daum C."/>
            <person name="Chiniquy J."/>
            <person name="Barry K."/>
            <person name="LaButti K."/>
            <person name="Haridas S."/>
            <person name="Simmons B.A."/>
            <person name="Magnuson J.K."/>
            <person name="Mortensen U.H."/>
            <person name="Larsen T.O."/>
            <person name="Grigoriev I.V."/>
            <person name="Baker S.E."/>
            <person name="Andersen M.R."/>
        </authorList>
    </citation>
    <scope>NUCLEOTIDE SEQUENCE [LARGE SCALE GENOMIC DNA]</scope>
    <source>
        <strain>IBT 16806</strain>
    </source>
</reference>
<reference key="2">
    <citation type="journal article" date="2018" name="Org. Lett.">
        <title>Genetic characterization of neosartorin biosynthesis provides insight into heterodimeric natural product generation.</title>
        <authorList>
            <person name="Matsuda Y."/>
            <person name="Gotfredsen C.H."/>
            <person name="Larsen T.O."/>
        </authorList>
    </citation>
    <scope>FUNCTION</scope>
</reference>
<evidence type="ECO:0000255" key="1">
    <source>
        <dbReference type="PROSITE-ProRule" id="PRU00227"/>
    </source>
</evidence>
<evidence type="ECO:0000269" key="2">
    <source>
    </source>
</evidence>
<evidence type="ECO:0000303" key="3">
    <source>
    </source>
</evidence>
<evidence type="ECO:0000305" key="4"/>
<dbReference type="EMBL" id="MSZS01000005">
    <property type="protein sequence ID" value="PKX92297.1"/>
    <property type="status" value="ALT_SEQ"/>
    <property type="molecule type" value="Genomic_DNA"/>
</dbReference>
<dbReference type="STRING" id="1392255.A0A2I1C3T0"/>
<dbReference type="VEuPathDB" id="FungiDB:P174DRAFT_512928"/>
<dbReference type="OrthoDB" id="2269373at2759"/>
<dbReference type="Proteomes" id="UP000234474">
    <property type="component" value="Unassembled WGS sequence"/>
</dbReference>
<dbReference type="GO" id="GO:0005634">
    <property type="term" value="C:nucleus"/>
    <property type="evidence" value="ECO:0007669"/>
    <property type="project" value="UniProtKB-SubCell"/>
</dbReference>
<dbReference type="GO" id="GO:0003677">
    <property type="term" value="F:DNA binding"/>
    <property type="evidence" value="ECO:0007669"/>
    <property type="project" value="UniProtKB-KW"/>
</dbReference>
<dbReference type="GO" id="GO:0000981">
    <property type="term" value="F:DNA-binding transcription factor activity, RNA polymerase II-specific"/>
    <property type="evidence" value="ECO:0007669"/>
    <property type="project" value="InterPro"/>
</dbReference>
<dbReference type="GO" id="GO:0008270">
    <property type="term" value="F:zinc ion binding"/>
    <property type="evidence" value="ECO:0007669"/>
    <property type="project" value="InterPro"/>
</dbReference>
<dbReference type="GO" id="GO:0006351">
    <property type="term" value="P:DNA-templated transcription"/>
    <property type="evidence" value="ECO:0007669"/>
    <property type="project" value="InterPro"/>
</dbReference>
<dbReference type="CDD" id="cd12148">
    <property type="entry name" value="fungal_TF_MHR"/>
    <property type="match status" value="1"/>
</dbReference>
<dbReference type="CDD" id="cd00067">
    <property type="entry name" value="GAL4"/>
    <property type="match status" value="1"/>
</dbReference>
<dbReference type="Gene3D" id="4.10.240.10">
    <property type="entry name" value="Zn(2)-C6 fungal-type DNA-binding domain"/>
    <property type="match status" value="1"/>
</dbReference>
<dbReference type="InterPro" id="IPR050613">
    <property type="entry name" value="Sec_Metabolite_Reg"/>
</dbReference>
<dbReference type="InterPro" id="IPR007219">
    <property type="entry name" value="Transcription_factor_dom_fun"/>
</dbReference>
<dbReference type="InterPro" id="IPR036864">
    <property type="entry name" value="Zn2-C6_fun-type_DNA-bd_sf"/>
</dbReference>
<dbReference type="InterPro" id="IPR001138">
    <property type="entry name" value="Zn2Cys6_DnaBD"/>
</dbReference>
<dbReference type="PANTHER" id="PTHR31001">
    <property type="entry name" value="UNCHARACTERIZED TRANSCRIPTIONAL REGULATORY PROTEIN"/>
    <property type="match status" value="1"/>
</dbReference>
<dbReference type="PANTHER" id="PTHR31001:SF45">
    <property type="entry name" value="ZN(II)2CYS6 TRANSCRIPTION FACTOR (EUROFUNG)"/>
    <property type="match status" value="1"/>
</dbReference>
<dbReference type="Pfam" id="PF04082">
    <property type="entry name" value="Fungal_trans"/>
    <property type="match status" value="1"/>
</dbReference>
<dbReference type="Pfam" id="PF00172">
    <property type="entry name" value="Zn_clus"/>
    <property type="match status" value="1"/>
</dbReference>
<dbReference type="SMART" id="SM00906">
    <property type="entry name" value="Fungal_trans"/>
    <property type="match status" value="1"/>
</dbReference>
<dbReference type="SMART" id="SM00066">
    <property type="entry name" value="GAL4"/>
    <property type="match status" value="1"/>
</dbReference>
<dbReference type="SUPFAM" id="SSF57701">
    <property type="entry name" value="Zn2/Cys6 DNA-binding domain"/>
    <property type="match status" value="1"/>
</dbReference>
<dbReference type="PROSITE" id="PS50048">
    <property type="entry name" value="ZN2_CY6_FUNGAL_2"/>
    <property type="match status" value="1"/>
</dbReference>
<accession>A0A2I1C3T0</accession>
<organism>
    <name type="scientific">Aspergillus novofumigatus (strain IBT 16806)</name>
    <dbReference type="NCBI Taxonomy" id="1392255"/>
    <lineage>
        <taxon>Eukaryota</taxon>
        <taxon>Fungi</taxon>
        <taxon>Dikarya</taxon>
        <taxon>Ascomycota</taxon>
        <taxon>Pezizomycotina</taxon>
        <taxon>Eurotiomycetes</taxon>
        <taxon>Eurotiomycetidae</taxon>
        <taxon>Eurotiales</taxon>
        <taxon>Aspergillaceae</taxon>
        <taxon>Aspergillus</taxon>
        <taxon>Aspergillus subgen. Fumigati</taxon>
    </lineage>
</organism>